<comment type="function">
    <text evidence="3 4 6 7">Essential for cardiac morphogenesis, particularly for the formation of the right ventricle and of the aortic arch arteries. Required for vascular development and regulation of angiogenesis, possibly through a VEGF signaling pathway. Also plays an important role in limb development, particularly in the establishment of anterior-posterior polarization, acting as an upstream regulator of sonic hedgehog (SHH) induction in the limb bud. Is involved in the development of branchial arches, which give rise to unique structures in the head and neck. Binds DNA on E-box consensus sequence 5'-CANNTG-3'.</text>
</comment>
<comment type="subunit">
    <text evidence="5">Efficient DNA binding requires dimerization with another bHLH protein. Forms homodimers and heterodimers with TCF3 gene products E12 and E47, HAND1 and HEY1, HEY2 and HEYL (hairy-related transcription factors).</text>
</comment>
<comment type="interaction">
    <interactant intactId="EBI-81388">
        <id>Q61039</id>
    </interactant>
    <interactant intactId="EBI-81361">
        <id>Q64279</id>
        <label>Hand1</label>
    </interactant>
    <organismsDiffer>false</organismsDiffer>
    <experiments>3</experiments>
</comment>
<comment type="interaction">
    <interactant intactId="EBI-81388">
        <id>Q61039</id>
    </interactant>
    <interactant intactId="EBI-641874">
        <id>Q99N72</id>
        <label>Mcf2</label>
    </interactant>
    <organismsDiffer>false</organismsDiffer>
    <experiments>3</experiments>
</comment>
<comment type="interaction">
    <interactant intactId="EBI-81388">
        <id>Q61039</id>
    </interactant>
    <interactant intactId="EBI-81370">
        <id>P15806</id>
        <label>Tcf3</label>
    </interactant>
    <organismsDiffer>false</organismsDiffer>
    <experiments>2</experiments>
</comment>
<comment type="subcellular location">
    <subcellularLocation>
        <location evidence="1">Nucleus</location>
    </subcellularLocation>
</comment>
<comment type="tissue specificity">
    <text>Heart and aorta.</text>
</comment>
<comment type="developmental stage">
    <text evidence="3 4 6">High extraembryonic expression is detected at 7.5 dpc in the maternally derived deciduum. Also detected along the yolk sac vessels during the process of remodeling at 9.5-10.0 dpc. Within the embryo, detected at 7.5 dpc in the lateral mesoderm including the precardiac mesoderm. On day 8.5 pc expressed throughout the straight heart tube. In the caudal region of the embryo, expressed in the lateral mesoderm at the level of separation of the somatic and splanchnic mesoderm. On day 9.5 pc expressed throughout the developing cardiovascular region, most abundant in the outflow tract and in the first and second aortic arch arteries, and in pharyngeal arches. As the heart loops, the expression becomes restricted to the conotruncus and future right ventricle (endocardium and myocardium). At 10.5 dpc, highly expressed in the branchial arches, as well as in the truncus arteriosus, aortic sac, and the vascular mesenchyme between the third and fourth aortic arch arteries, which later gives rise to vascular smooth muscle cells and to the mesenchyme of the pharyngeal arch. At 13.5 dpc, barely detectable in the heart, but apparent in the neural crest-derived sympathetic trunk and adrenal medulla, a pattern similar to that of HAND1. In the developing limbs, expression is detected in the posterior mesoderm of the buds at 9.5 dpc. It is then progressively down-regulated at the anterior of the limb buds so that a gradient expression along the anterior-posterior axis of the bud is established with higher expression at the posterior border. At later stages of limb development, expression is restricted to the posterior border of the zeugopod and to the posterior autopod. In the autopod, dynamic expression of HAND2 affects the interdigital regions, the lateral borders of the digits and eventually the developing ventral tendons. After 16 dpc, expression decreases throughout the embryo.</text>
</comment>
<comment type="sequence caution" evidence="8">
    <conflict type="frameshift">
        <sequence resource="EMBL-CDS" id="AAA86274"/>
    </conflict>
</comment>
<comment type="sequence caution" evidence="8">
    <conflict type="frameshift">
        <sequence resource="EMBL-CDS" id="AAC52338"/>
    </conflict>
</comment>
<organism>
    <name type="scientific">Mus musculus</name>
    <name type="common">Mouse</name>
    <dbReference type="NCBI Taxonomy" id="10090"/>
    <lineage>
        <taxon>Eukaryota</taxon>
        <taxon>Metazoa</taxon>
        <taxon>Chordata</taxon>
        <taxon>Craniata</taxon>
        <taxon>Vertebrata</taxon>
        <taxon>Euteleostomi</taxon>
        <taxon>Mammalia</taxon>
        <taxon>Eutheria</taxon>
        <taxon>Euarchontoglires</taxon>
        <taxon>Glires</taxon>
        <taxon>Rodentia</taxon>
        <taxon>Myomorpha</taxon>
        <taxon>Muroidea</taxon>
        <taxon>Muridae</taxon>
        <taxon>Murinae</taxon>
        <taxon>Mus</taxon>
        <taxon>Mus</taxon>
    </lineage>
</organism>
<evidence type="ECO:0000255" key="1">
    <source>
        <dbReference type="PROSITE-ProRule" id="PRU00981"/>
    </source>
</evidence>
<evidence type="ECO:0000256" key="2">
    <source>
        <dbReference type="SAM" id="MobiDB-lite"/>
    </source>
</evidence>
<evidence type="ECO:0000269" key="3">
    <source>
    </source>
</evidence>
<evidence type="ECO:0000269" key="4">
    <source>
    </source>
</evidence>
<evidence type="ECO:0000269" key="5">
    <source>
    </source>
</evidence>
<evidence type="ECO:0000269" key="6">
    <source>
    </source>
</evidence>
<evidence type="ECO:0000269" key="7">
    <source>
    </source>
</evidence>
<evidence type="ECO:0000305" key="8"/>
<proteinExistence type="evidence at protein level"/>
<sequence>MSLVGGFPHHPVVHHEGYPFAAAAAAAAAAAASRCSHEENPYFHGWLIGHPEMSPPDYSMALSYSPEYASGAAGLDHSHYGGVPPGAGPPGLGGPRPVKRRGTANRKERRRTQSINSAFAELRECIPNVPADTKLSKIKTLRLATSYIAYLMDLLAKDDQNGEAEAFKAEIKKTDVKEEKRKKELNEILKSTVSSNDKKTKGRTGWPQHVWALELKQ</sequence>
<protein>
    <recommendedName>
        <fullName>Heart- and neural crest derivatives-expressed protein 2</fullName>
    </recommendedName>
    <alternativeName>
        <fullName>Deciduum, heart, autonomic nervous system and neural crest derivatives-expressed protein 2</fullName>
        <shortName>dHAND</shortName>
    </alternativeName>
    <alternativeName>
        <fullName>Helix-loop-helix transcription factor expressed in embryo and deciduum</fullName>
    </alternativeName>
    <alternativeName>
        <fullName>Thing-2</fullName>
    </alternativeName>
</protein>
<name>HAND2_MOUSE</name>
<keyword id="KW-0037">Angiogenesis</keyword>
<keyword id="KW-0217">Developmental protein</keyword>
<keyword id="KW-0221">Differentiation</keyword>
<keyword id="KW-0238">DNA-binding</keyword>
<keyword id="KW-0539">Nucleus</keyword>
<keyword id="KW-1185">Reference proteome</keyword>
<keyword id="KW-0804">Transcription</keyword>
<keyword id="KW-0805">Transcription regulation</keyword>
<accession>Q61039</accession>
<accession>Q61100</accession>
<reference key="1">
    <citation type="journal article" date="1995" name="Science">
        <title>A subclass of bHLH proteins required for cardiac morphogenesis.</title>
        <authorList>
            <person name="Srivastava D."/>
            <person name="Cserjesi P."/>
            <person name="Olson E.N."/>
        </authorList>
    </citation>
    <scope>NUCLEOTIDE SEQUENCE [GENOMIC DNA]</scope>
    <source>
        <tissue>Embryo</tissue>
    </source>
</reference>
<reference key="2">
    <citation type="journal article" date="2005" name="Science">
        <title>The transcriptional landscape of the mammalian genome.</title>
        <authorList>
            <person name="Carninci P."/>
            <person name="Kasukawa T."/>
            <person name="Katayama S."/>
            <person name="Gough J."/>
            <person name="Frith M.C."/>
            <person name="Maeda N."/>
            <person name="Oyama R."/>
            <person name="Ravasi T."/>
            <person name="Lenhard B."/>
            <person name="Wells C."/>
            <person name="Kodzius R."/>
            <person name="Shimokawa K."/>
            <person name="Bajic V.B."/>
            <person name="Brenner S.E."/>
            <person name="Batalov S."/>
            <person name="Forrest A.R."/>
            <person name="Zavolan M."/>
            <person name="Davis M.J."/>
            <person name="Wilming L.G."/>
            <person name="Aidinis V."/>
            <person name="Allen J.E."/>
            <person name="Ambesi-Impiombato A."/>
            <person name="Apweiler R."/>
            <person name="Aturaliya R.N."/>
            <person name="Bailey T.L."/>
            <person name="Bansal M."/>
            <person name="Baxter L."/>
            <person name="Beisel K.W."/>
            <person name="Bersano T."/>
            <person name="Bono H."/>
            <person name="Chalk A.M."/>
            <person name="Chiu K.P."/>
            <person name="Choudhary V."/>
            <person name="Christoffels A."/>
            <person name="Clutterbuck D.R."/>
            <person name="Crowe M.L."/>
            <person name="Dalla E."/>
            <person name="Dalrymple B.P."/>
            <person name="de Bono B."/>
            <person name="Della Gatta G."/>
            <person name="di Bernardo D."/>
            <person name="Down T."/>
            <person name="Engstrom P."/>
            <person name="Fagiolini M."/>
            <person name="Faulkner G."/>
            <person name="Fletcher C.F."/>
            <person name="Fukushima T."/>
            <person name="Furuno M."/>
            <person name="Futaki S."/>
            <person name="Gariboldi M."/>
            <person name="Georgii-Hemming P."/>
            <person name="Gingeras T.R."/>
            <person name="Gojobori T."/>
            <person name="Green R.E."/>
            <person name="Gustincich S."/>
            <person name="Harbers M."/>
            <person name="Hayashi Y."/>
            <person name="Hensch T.K."/>
            <person name="Hirokawa N."/>
            <person name="Hill D."/>
            <person name="Huminiecki L."/>
            <person name="Iacono M."/>
            <person name="Ikeo K."/>
            <person name="Iwama A."/>
            <person name="Ishikawa T."/>
            <person name="Jakt M."/>
            <person name="Kanapin A."/>
            <person name="Katoh M."/>
            <person name="Kawasawa Y."/>
            <person name="Kelso J."/>
            <person name="Kitamura H."/>
            <person name="Kitano H."/>
            <person name="Kollias G."/>
            <person name="Krishnan S.P."/>
            <person name="Kruger A."/>
            <person name="Kummerfeld S.K."/>
            <person name="Kurochkin I.V."/>
            <person name="Lareau L.F."/>
            <person name="Lazarevic D."/>
            <person name="Lipovich L."/>
            <person name="Liu J."/>
            <person name="Liuni S."/>
            <person name="McWilliam S."/>
            <person name="Madan Babu M."/>
            <person name="Madera M."/>
            <person name="Marchionni L."/>
            <person name="Matsuda H."/>
            <person name="Matsuzawa S."/>
            <person name="Miki H."/>
            <person name="Mignone F."/>
            <person name="Miyake S."/>
            <person name="Morris K."/>
            <person name="Mottagui-Tabar S."/>
            <person name="Mulder N."/>
            <person name="Nakano N."/>
            <person name="Nakauchi H."/>
            <person name="Ng P."/>
            <person name="Nilsson R."/>
            <person name="Nishiguchi S."/>
            <person name="Nishikawa S."/>
            <person name="Nori F."/>
            <person name="Ohara O."/>
            <person name="Okazaki Y."/>
            <person name="Orlando V."/>
            <person name="Pang K.C."/>
            <person name="Pavan W.J."/>
            <person name="Pavesi G."/>
            <person name="Pesole G."/>
            <person name="Petrovsky N."/>
            <person name="Piazza S."/>
            <person name="Reed J."/>
            <person name="Reid J.F."/>
            <person name="Ring B.Z."/>
            <person name="Ringwald M."/>
            <person name="Rost B."/>
            <person name="Ruan Y."/>
            <person name="Salzberg S.L."/>
            <person name="Sandelin A."/>
            <person name="Schneider C."/>
            <person name="Schoenbach C."/>
            <person name="Sekiguchi K."/>
            <person name="Semple C.A."/>
            <person name="Seno S."/>
            <person name="Sessa L."/>
            <person name="Sheng Y."/>
            <person name="Shibata Y."/>
            <person name="Shimada H."/>
            <person name="Shimada K."/>
            <person name="Silva D."/>
            <person name="Sinclair B."/>
            <person name="Sperling S."/>
            <person name="Stupka E."/>
            <person name="Sugiura K."/>
            <person name="Sultana R."/>
            <person name="Takenaka Y."/>
            <person name="Taki K."/>
            <person name="Tammoja K."/>
            <person name="Tan S.L."/>
            <person name="Tang S."/>
            <person name="Taylor M.S."/>
            <person name="Tegner J."/>
            <person name="Teichmann S.A."/>
            <person name="Ueda H.R."/>
            <person name="van Nimwegen E."/>
            <person name="Verardo R."/>
            <person name="Wei C.L."/>
            <person name="Yagi K."/>
            <person name="Yamanishi H."/>
            <person name="Zabarovsky E."/>
            <person name="Zhu S."/>
            <person name="Zimmer A."/>
            <person name="Hide W."/>
            <person name="Bult C."/>
            <person name="Grimmond S.M."/>
            <person name="Teasdale R.D."/>
            <person name="Liu E.T."/>
            <person name="Brusic V."/>
            <person name="Quackenbush J."/>
            <person name="Wahlestedt C."/>
            <person name="Mattick J.S."/>
            <person name="Hume D.A."/>
            <person name="Kai C."/>
            <person name="Sasaki D."/>
            <person name="Tomaru Y."/>
            <person name="Fukuda S."/>
            <person name="Kanamori-Katayama M."/>
            <person name="Suzuki M."/>
            <person name="Aoki J."/>
            <person name="Arakawa T."/>
            <person name="Iida J."/>
            <person name="Imamura K."/>
            <person name="Itoh M."/>
            <person name="Kato T."/>
            <person name="Kawaji H."/>
            <person name="Kawagashira N."/>
            <person name="Kawashima T."/>
            <person name="Kojima M."/>
            <person name="Kondo S."/>
            <person name="Konno H."/>
            <person name="Nakano K."/>
            <person name="Ninomiya N."/>
            <person name="Nishio T."/>
            <person name="Okada M."/>
            <person name="Plessy C."/>
            <person name="Shibata K."/>
            <person name="Shiraki T."/>
            <person name="Suzuki S."/>
            <person name="Tagami M."/>
            <person name="Waki K."/>
            <person name="Watahiki A."/>
            <person name="Okamura-Oho Y."/>
            <person name="Suzuki H."/>
            <person name="Kawai J."/>
            <person name="Hayashizaki Y."/>
        </authorList>
    </citation>
    <scope>NUCLEOTIDE SEQUENCE [LARGE SCALE MRNA]</scope>
    <source>
        <strain>C57BL/6J</strain>
    </source>
</reference>
<reference key="3">
    <citation type="journal article" date="1995" name="Development">
        <title>Hxt encodes a basic helix-loop-helix transcription factor that regulates trophoblast cell development.</title>
        <authorList>
            <person name="Cross J.C."/>
            <person name="Flannery M.L."/>
            <person name="Blanar M.A."/>
            <person name="Steingrimsson E."/>
            <person name="Jenkins N.A."/>
            <person name="Copeland N.G."/>
            <person name="Rutter W.J."/>
            <person name="Werb Z."/>
        </authorList>
    </citation>
    <scope>NUCLEOTIDE SEQUENCE [MRNA] OF 92-203</scope>
    <source>
        <strain>129/Sv</strain>
        <tissue>Embryoid bodies</tissue>
    </source>
</reference>
<reference key="4">
    <citation type="journal article" date="1997" name="Nat. Genet.">
        <title>Regulation of cardiac mesodermal and neural crest development by the bHLH transcription factor, dHAND.</title>
        <authorList>
            <person name="Srivastava D."/>
            <person name="Thomas T."/>
            <person name="Lin Q."/>
            <person name="Kirby M.L."/>
            <person name="Brown D."/>
            <person name="Olson E.N."/>
        </authorList>
    </citation>
    <scope>FUNCTION</scope>
    <scope>DEVELOPMENTAL STAGE</scope>
</reference>
<reference key="5">
    <citation type="journal article" date="1998" name="Development">
        <title>A signaling cascade involving endothelin-1, dHAND and msx1 regulates development of neural-crest-derived branchial arch mesenchyme.</title>
        <authorList>
            <person name="Thomas T."/>
            <person name="Kurihara H."/>
            <person name="Yamagishi H."/>
            <person name="Kurihara Y."/>
            <person name="Yazaki Y."/>
            <person name="Olson E.N."/>
            <person name="Srivastava D."/>
        </authorList>
    </citation>
    <scope>FUNCTION</scope>
</reference>
<reference key="6">
    <citation type="journal article" date="2000" name="J. Biol. Chem.">
        <title>The basic helix-loop-helix transcription factors dHAND and eHAND exhibit dimerization characteristics that suggest complex regulation of function.</title>
        <authorList>
            <person name="Firulli B.A."/>
            <person name="Hadzic D.B."/>
            <person name="McDaid J.R."/>
            <person name="Firulli A.B."/>
        </authorList>
    </citation>
    <scope>SUBUNIT</scope>
</reference>
<reference key="7">
    <citation type="journal article" date="2000" name="Development">
        <title>The bHLH transcription factor dHAND controls Sonic hedgehog expression and establishment of the zone of polarizing activity during limb development.</title>
        <authorList>
            <person name="Charite J."/>
            <person name="McFadden D.G."/>
            <person name="Olson E.N."/>
        </authorList>
    </citation>
    <scope>FUNCTION</scope>
    <scope>DEVELOPMENTAL STAGE</scope>
</reference>
<reference key="8">
    <citation type="journal article" date="2000" name="Development">
        <title>Role of dHAND in the anterior-posterior polarization of the limb bud: implications for the Sonic hedgehog pathway.</title>
        <authorList>
            <person name="Fernandez-Teran M."/>
            <person name="Piedra M.E."/>
            <person name="Kathiriya I.S."/>
            <person name="Srivastava D."/>
            <person name="Rodriguez-Rey J.C."/>
            <person name="Ros M.A."/>
        </authorList>
    </citation>
    <scope>FUNCTION</scope>
    <scope>DEVELOPMENTAL STAGE</scope>
</reference>
<gene>
    <name type="primary">Hand2</name>
    <name type="synonym">Dhand</name>
    <name type="synonym">Hed</name>
    <name type="synonym">Thing2</name>
</gene>
<dbReference type="EMBL" id="U40039">
    <property type="protein sequence ID" value="AAC52338.1"/>
    <property type="status" value="ALT_FRAME"/>
    <property type="molecule type" value="Genomic_DNA"/>
</dbReference>
<dbReference type="EMBL" id="AK035160">
    <property type="protein sequence ID" value="BAC28965.1"/>
    <property type="molecule type" value="mRNA"/>
</dbReference>
<dbReference type="EMBL" id="U43715">
    <property type="protein sequence ID" value="AAA86274.1"/>
    <property type="status" value="ALT_FRAME"/>
    <property type="molecule type" value="mRNA"/>
</dbReference>
<dbReference type="CCDS" id="CCDS22315.1"/>
<dbReference type="RefSeq" id="NP_034532.3">
    <property type="nucleotide sequence ID" value="NM_010402.4"/>
</dbReference>
<dbReference type="SMR" id="Q61039"/>
<dbReference type="BioGRID" id="200205">
    <property type="interactions" value="7"/>
</dbReference>
<dbReference type="FunCoup" id="Q61039">
    <property type="interactions" value="570"/>
</dbReference>
<dbReference type="IntAct" id="Q61039">
    <property type="interactions" value="8"/>
</dbReference>
<dbReference type="STRING" id="10090.ENSMUSP00000044983"/>
<dbReference type="GlyGen" id="Q61039">
    <property type="glycosylation" value="1 site"/>
</dbReference>
<dbReference type="iPTMnet" id="Q61039"/>
<dbReference type="PhosphoSitePlus" id="Q61039"/>
<dbReference type="jPOST" id="Q61039"/>
<dbReference type="PaxDb" id="10090-ENSMUSP00000044983"/>
<dbReference type="ProteomicsDB" id="271390"/>
<dbReference type="Antibodypedia" id="28534">
    <property type="antibodies" value="295 antibodies from 30 providers"/>
</dbReference>
<dbReference type="DNASU" id="15111"/>
<dbReference type="Ensembl" id="ENSMUST00000040104.5">
    <property type="protein sequence ID" value="ENSMUSP00000044983.4"/>
    <property type="gene ID" value="ENSMUSG00000038193.5"/>
</dbReference>
<dbReference type="GeneID" id="15111"/>
<dbReference type="KEGG" id="mmu:15111"/>
<dbReference type="UCSC" id="uc009lss.2">
    <property type="organism name" value="mouse"/>
</dbReference>
<dbReference type="AGR" id="MGI:103580"/>
<dbReference type="CTD" id="9464"/>
<dbReference type="MGI" id="MGI:103580">
    <property type="gene designation" value="Hand2"/>
</dbReference>
<dbReference type="VEuPathDB" id="HostDB:ENSMUSG00000038193"/>
<dbReference type="eggNOG" id="KOG4029">
    <property type="taxonomic scope" value="Eukaryota"/>
</dbReference>
<dbReference type="GeneTree" id="ENSGT00940000160772"/>
<dbReference type="HOGENOM" id="CLU_119591_0_0_1"/>
<dbReference type="InParanoid" id="Q61039"/>
<dbReference type="OMA" id="PDYGMAL"/>
<dbReference type="OrthoDB" id="10055449at2759"/>
<dbReference type="PhylomeDB" id="Q61039"/>
<dbReference type="TreeFam" id="TF315153"/>
<dbReference type="BioGRID-ORCS" id="15111">
    <property type="hits" value="2 hits in 78 CRISPR screens"/>
</dbReference>
<dbReference type="ChiTaRS" id="Hand2">
    <property type="organism name" value="mouse"/>
</dbReference>
<dbReference type="PRO" id="PR:Q61039"/>
<dbReference type="Proteomes" id="UP000000589">
    <property type="component" value="Chromosome 8"/>
</dbReference>
<dbReference type="RNAct" id="Q61039">
    <property type="molecule type" value="protein"/>
</dbReference>
<dbReference type="Bgee" id="ENSMUSG00000038193">
    <property type="expression patterns" value="Expressed in gastrula and 163 other cell types or tissues"/>
</dbReference>
<dbReference type="GO" id="GO:0000785">
    <property type="term" value="C:chromatin"/>
    <property type="evidence" value="ECO:0007669"/>
    <property type="project" value="Ensembl"/>
</dbReference>
<dbReference type="GO" id="GO:0005654">
    <property type="term" value="C:nucleoplasm"/>
    <property type="evidence" value="ECO:0000304"/>
    <property type="project" value="Reactome"/>
</dbReference>
<dbReference type="GO" id="GO:0005634">
    <property type="term" value="C:nucleus"/>
    <property type="evidence" value="ECO:0000314"/>
    <property type="project" value="MGI"/>
</dbReference>
<dbReference type="GO" id="GO:0005667">
    <property type="term" value="C:transcription regulator complex"/>
    <property type="evidence" value="ECO:0000314"/>
    <property type="project" value="BHF-UCL"/>
</dbReference>
<dbReference type="GO" id="GO:0001228">
    <property type="term" value="F:DNA-binding transcription activator activity, RNA polymerase II-specific"/>
    <property type="evidence" value="ECO:0000314"/>
    <property type="project" value="BHF-UCL"/>
</dbReference>
<dbReference type="GO" id="GO:0003700">
    <property type="term" value="F:DNA-binding transcription factor activity"/>
    <property type="evidence" value="ECO:0000304"/>
    <property type="project" value="MGI"/>
</dbReference>
<dbReference type="GO" id="GO:0000981">
    <property type="term" value="F:DNA-binding transcription factor activity, RNA polymerase II-specific"/>
    <property type="evidence" value="ECO:0000250"/>
    <property type="project" value="BHF-UCL"/>
</dbReference>
<dbReference type="GO" id="GO:0070888">
    <property type="term" value="F:E-box binding"/>
    <property type="evidence" value="ECO:0000314"/>
    <property type="project" value="MGI"/>
</dbReference>
<dbReference type="GO" id="GO:0003680">
    <property type="term" value="F:minor groove of adenine-thymine-rich DNA binding"/>
    <property type="evidence" value="ECO:0007669"/>
    <property type="project" value="Ensembl"/>
</dbReference>
<dbReference type="GO" id="GO:0042803">
    <property type="term" value="F:protein homodimerization activity"/>
    <property type="evidence" value="ECO:0000353"/>
    <property type="project" value="BHF-UCL"/>
</dbReference>
<dbReference type="GO" id="GO:0061629">
    <property type="term" value="F:RNA polymerase II-specific DNA-binding transcription factor binding"/>
    <property type="evidence" value="ECO:0000353"/>
    <property type="project" value="BHF-UCL"/>
</dbReference>
<dbReference type="GO" id="GO:0043565">
    <property type="term" value="F:sequence-specific DNA binding"/>
    <property type="evidence" value="ECO:0000316"/>
    <property type="project" value="MGI"/>
</dbReference>
<dbReference type="GO" id="GO:0001223">
    <property type="term" value="F:transcription coactivator binding"/>
    <property type="evidence" value="ECO:0000250"/>
    <property type="project" value="BHF-UCL"/>
</dbReference>
<dbReference type="GO" id="GO:0007512">
    <property type="term" value="P:adult heart development"/>
    <property type="evidence" value="ECO:0000315"/>
    <property type="project" value="MGI"/>
</dbReference>
<dbReference type="GO" id="GO:0001525">
    <property type="term" value="P:angiogenesis"/>
    <property type="evidence" value="ECO:0007669"/>
    <property type="project" value="UniProtKB-KW"/>
</dbReference>
<dbReference type="GO" id="GO:0006915">
    <property type="term" value="P:apoptotic process"/>
    <property type="evidence" value="ECO:0000315"/>
    <property type="project" value="MGI"/>
</dbReference>
<dbReference type="GO" id="GO:0003278">
    <property type="term" value="P:apoptotic process involved in heart morphogenesis"/>
    <property type="evidence" value="ECO:0000315"/>
    <property type="project" value="MGI"/>
</dbReference>
<dbReference type="GO" id="GO:0055007">
    <property type="term" value="P:cardiac muscle cell differentiation"/>
    <property type="evidence" value="ECO:0000304"/>
    <property type="project" value="MGI"/>
</dbReference>
<dbReference type="GO" id="GO:0061309">
    <property type="term" value="P:cardiac neural crest cell development involved in outflow tract morphogenesis"/>
    <property type="evidence" value="ECO:0000315"/>
    <property type="project" value="BHF-UCL"/>
</dbReference>
<dbReference type="GO" id="GO:0003253">
    <property type="term" value="P:cardiac neural crest cell migration involved in outflow tract morphogenesis"/>
    <property type="evidence" value="ECO:0000315"/>
    <property type="project" value="MGI"/>
</dbReference>
<dbReference type="GO" id="GO:0003219">
    <property type="term" value="P:cardiac right ventricle formation"/>
    <property type="evidence" value="ECO:0000315"/>
    <property type="project" value="BHF-UCL"/>
</dbReference>
<dbReference type="GO" id="GO:0003215">
    <property type="term" value="P:cardiac right ventricle morphogenesis"/>
    <property type="evidence" value="ECO:0000304"/>
    <property type="project" value="MGI"/>
</dbReference>
<dbReference type="GO" id="GO:0060536">
    <property type="term" value="P:cartilage morphogenesis"/>
    <property type="evidence" value="ECO:0000316"/>
    <property type="project" value="MGI"/>
</dbReference>
<dbReference type="GO" id="GO:0061325">
    <property type="term" value="P:cell proliferation involved in outflow tract morphogenesis"/>
    <property type="evidence" value="ECO:0000315"/>
    <property type="project" value="MGI"/>
</dbReference>
<dbReference type="GO" id="GO:0071300">
    <property type="term" value="P:cellular response to retinoic acid"/>
    <property type="evidence" value="ECO:0007669"/>
    <property type="project" value="Ensembl"/>
</dbReference>
<dbReference type="GO" id="GO:0060982">
    <property type="term" value="P:coronary artery morphogenesis"/>
    <property type="evidence" value="ECO:0000315"/>
    <property type="project" value="MGI"/>
</dbReference>
<dbReference type="GO" id="GO:0061371">
    <property type="term" value="P:determination of heart left/right asymmetry"/>
    <property type="evidence" value="ECO:0000315"/>
    <property type="project" value="MGI"/>
</dbReference>
<dbReference type="GO" id="GO:0042733">
    <property type="term" value="P:embryonic digit morphogenesis"/>
    <property type="evidence" value="ECO:0000314"/>
    <property type="project" value="MGI"/>
</dbReference>
<dbReference type="GO" id="GO:0048706">
    <property type="term" value="P:embryonic skeletal system development"/>
    <property type="evidence" value="ECO:0000316"/>
    <property type="project" value="MGI"/>
</dbReference>
<dbReference type="GO" id="GO:1904019">
    <property type="term" value="P:epithelial cell apoptotic process"/>
    <property type="evidence" value="ECO:0000315"/>
    <property type="project" value="MGI"/>
</dbReference>
<dbReference type="GO" id="GO:0007507">
    <property type="term" value="P:heart development"/>
    <property type="evidence" value="ECO:0000316"/>
    <property type="project" value="MGI"/>
</dbReference>
<dbReference type="GO" id="GO:0001947">
    <property type="term" value="P:heart looping"/>
    <property type="evidence" value="ECO:0000315"/>
    <property type="project" value="MGI"/>
</dbReference>
<dbReference type="GO" id="GO:0003007">
    <property type="term" value="P:heart morphogenesis"/>
    <property type="evidence" value="ECO:0000315"/>
    <property type="project" value="MGI"/>
</dbReference>
<dbReference type="GO" id="GO:0001701">
    <property type="term" value="P:in utero embryonic development"/>
    <property type="evidence" value="ECO:0000315"/>
    <property type="project" value="MGI"/>
</dbReference>
<dbReference type="GO" id="GO:0010463">
    <property type="term" value="P:mesenchymal cell proliferation"/>
    <property type="evidence" value="ECO:0000315"/>
    <property type="project" value="MGI"/>
</dbReference>
<dbReference type="GO" id="GO:0060485">
    <property type="term" value="P:mesenchyme development"/>
    <property type="evidence" value="ECO:0000316"/>
    <property type="project" value="MGI"/>
</dbReference>
<dbReference type="GO" id="GO:0010667">
    <property type="term" value="P:negative regulation of cardiac muscle cell apoptotic process"/>
    <property type="evidence" value="ECO:0000315"/>
    <property type="project" value="BHF-UCL"/>
</dbReference>
<dbReference type="GO" id="GO:1904036">
    <property type="term" value="P:negative regulation of epithelial cell apoptotic process"/>
    <property type="evidence" value="ECO:0000315"/>
    <property type="project" value="MGI"/>
</dbReference>
<dbReference type="GO" id="GO:0010629">
    <property type="term" value="P:negative regulation of gene expression"/>
    <property type="evidence" value="ECO:0007669"/>
    <property type="project" value="Ensembl"/>
</dbReference>
<dbReference type="GO" id="GO:0045668">
    <property type="term" value="P:negative regulation of osteoblast differentiation"/>
    <property type="evidence" value="ECO:0000314"/>
    <property type="project" value="MGI"/>
</dbReference>
<dbReference type="GO" id="GO:0014032">
    <property type="term" value="P:neural crest cell development"/>
    <property type="evidence" value="ECO:0000315"/>
    <property type="project" value="MGI"/>
</dbReference>
<dbReference type="GO" id="GO:0042421">
    <property type="term" value="P:norepinephrine biosynthetic process"/>
    <property type="evidence" value="ECO:0000315"/>
    <property type="project" value="BHF-UCL"/>
</dbReference>
<dbReference type="GO" id="GO:0042475">
    <property type="term" value="P:odontogenesis of dentin-containing tooth"/>
    <property type="evidence" value="ECO:0000316"/>
    <property type="project" value="MGI"/>
</dbReference>
<dbReference type="GO" id="GO:0001649">
    <property type="term" value="P:osteoblast differentiation"/>
    <property type="evidence" value="ECO:0000315"/>
    <property type="project" value="MGI"/>
</dbReference>
<dbReference type="GO" id="GO:0003151">
    <property type="term" value="P:outflow tract morphogenesis"/>
    <property type="evidence" value="ECO:0000315"/>
    <property type="project" value="BHF-UCL"/>
</dbReference>
<dbReference type="GO" id="GO:0048935">
    <property type="term" value="P:peripheral nervous system neuron development"/>
    <property type="evidence" value="ECO:0000314"/>
    <property type="project" value="MGI"/>
</dbReference>
<dbReference type="GO" id="GO:0010613">
    <property type="term" value="P:positive regulation of cardiac muscle hypertrophy"/>
    <property type="evidence" value="ECO:0007669"/>
    <property type="project" value="Ensembl"/>
</dbReference>
<dbReference type="GO" id="GO:0045893">
    <property type="term" value="P:positive regulation of DNA-templated transcription"/>
    <property type="evidence" value="ECO:0000314"/>
    <property type="project" value="MGI"/>
</dbReference>
<dbReference type="GO" id="GO:0070374">
    <property type="term" value="P:positive regulation of ERK1 and ERK2 cascade"/>
    <property type="evidence" value="ECO:0007669"/>
    <property type="project" value="Ensembl"/>
</dbReference>
<dbReference type="GO" id="GO:0010628">
    <property type="term" value="P:positive regulation of gene expression"/>
    <property type="evidence" value="ECO:0007669"/>
    <property type="project" value="Ensembl"/>
</dbReference>
<dbReference type="GO" id="GO:1900745">
    <property type="term" value="P:positive regulation of p38MAPK cascade"/>
    <property type="evidence" value="ECO:0007669"/>
    <property type="project" value="Ensembl"/>
</dbReference>
<dbReference type="GO" id="GO:2001262">
    <property type="term" value="P:positive regulation of semaphorin-plexin signaling pathway"/>
    <property type="evidence" value="ECO:0000315"/>
    <property type="project" value="BHF-UCL"/>
</dbReference>
<dbReference type="GO" id="GO:0045944">
    <property type="term" value="P:positive regulation of transcription by RNA polymerase II"/>
    <property type="evidence" value="ECO:0000314"/>
    <property type="project" value="BHF-UCL"/>
</dbReference>
<dbReference type="GO" id="GO:1903929">
    <property type="term" value="P:primary palate development"/>
    <property type="evidence" value="ECO:0000315"/>
    <property type="project" value="MGI"/>
</dbReference>
<dbReference type="GO" id="GO:0006355">
    <property type="term" value="P:regulation of DNA-templated transcription"/>
    <property type="evidence" value="ECO:0000314"/>
    <property type="project" value="MGI"/>
</dbReference>
<dbReference type="GO" id="GO:0003266">
    <property type="term" value="P:regulation of secondary heart field cardioblast proliferation"/>
    <property type="evidence" value="ECO:0000315"/>
    <property type="project" value="BHF-UCL"/>
</dbReference>
<dbReference type="GO" id="GO:0034103">
    <property type="term" value="P:regulation of tissue remodeling"/>
    <property type="evidence" value="ECO:0007669"/>
    <property type="project" value="Ensembl"/>
</dbReference>
<dbReference type="GO" id="GO:0060021">
    <property type="term" value="P:roof of mouth development"/>
    <property type="evidence" value="ECO:0000315"/>
    <property type="project" value="MGI"/>
</dbReference>
<dbReference type="GO" id="GO:0001967">
    <property type="term" value="P:suckling behavior"/>
    <property type="evidence" value="ECO:0000315"/>
    <property type="project" value="MGI"/>
</dbReference>
<dbReference type="GO" id="GO:0048485">
    <property type="term" value="P:sympathetic nervous system development"/>
    <property type="evidence" value="ECO:0000314"/>
    <property type="project" value="MGI"/>
</dbReference>
<dbReference type="GO" id="GO:0048538">
    <property type="term" value="P:thymus development"/>
    <property type="evidence" value="ECO:0000315"/>
    <property type="project" value="BHF-UCL"/>
</dbReference>
<dbReference type="GO" id="GO:0043586">
    <property type="term" value="P:tongue development"/>
    <property type="evidence" value="ECO:0000315"/>
    <property type="project" value="MGI"/>
</dbReference>
<dbReference type="GO" id="GO:0061032">
    <property type="term" value="P:visceral serous pericardium development"/>
    <property type="evidence" value="ECO:0000315"/>
    <property type="project" value="MGI"/>
</dbReference>
<dbReference type="CDD" id="cd11471">
    <property type="entry name" value="bHLH_TS_HAND2"/>
    <property type="match status" value="1"/>
</dbReference>
<dbReference type="FunFam" id="4.10.280.10:FF:000010">
    <property type="entry name" value="Scleraxis bHLH transcription factor"/>
    <property type="match status" value="1"/>
</dbReference>
<dbReference type="Gene3D" id="4.10.280.10">
    <property type="entry name" value="Helix-loop-helix DNA-binding domain"/>
    <property type="match status" value="1"/>
</dbReference>
<dbReference type="InterPro" id="IPR011598">
    <property type="entry name" value="bHLH_dom"/>
</dbReference>
<dbReference type="InterPro" id="IPR050283">
    <property type="entry name" value="E-box_TF_Regulators"/>
</dbReference>
<dbReference type="InterPro" id="IPR036638">
    <property type="entry name" value="HLH_DNA-bd_sf"/>
</dbReference>
<dbReference type="PANTHER" id="PTHR23349">
    <property type="entry name" value="BASIC HELIX-LOOP-HELIX TRANSCRIPTION FACTOR, TWIST"/>
    <property type="match status" value="1"/>
</dbReference>
<dbReference type="PANTHER" id="PTHR23349:SF41">
    <property type="entry name" value="HEART- AND NEURAL CREST DERIVATIVES-EXPRESSED PROTEIN 2"/>
    <property type="match status" value="1"/>
</dbReference>
<dbReference type="Pfam" id="PF00010">
    <property type="entry name" value="HLH"/>
    <property type="match status" value="1"/>
</dbReference>
<dbReference type="SMART" id="SM00353">
    <property type="entry name" value="HLH"/>
    <property type="match status" value="1"/>
</dbReference>
<dbReference type="SUPFAM" id="SSF47459">
    <property type="entry name" value="HLH, helix-loop-helix DNA-binding domain"/>
    <property type="match status" value="1"/>
</dbReference>
<dbReference type="PROSITE" id="PS50888">
    <property type="entry name" value="BHLH"/>
    <property type="match status" value="1"/>
</dbReference>
<feature type="chain" id="PRO_0000127192" description="Heart- and neural crest derivatives-expressed protein 2">
    <location>
        <begin position="1"/>
        <end position="217"/>
    </location>
</feature>
<feature type="domain" description="bHLH" evidence="1">
    <location>
        <begin position="99"/>
        <end position="151"/>
    </location>
</feature>
<feature type="region of interest" description="Disordered" evidence="2">
    <location>
        <begin position="76"/>
        <end position="116"/>
    </location>
</feature>
<feature type="compositionally biased region" description="Gly residues" evidence="2">
    <location>
        <begin position="83"/>
        <end position="94"/>
    </location>
</feature>
<feature type="compositionally biased region" description="Basic residues" evidence="2">
    <location>
        <begin position="97"/>
        <end position="112"/>
    </location>
</feature>
<feature type="sequence conflict" description="In Ref. 3; AAA86274." evidence="8" ref="3">
    <original>LG</original>
    <variation>TA</variation>
    <location>
        <begin position="92"/>
        <end position="93"/>
    </location>
</feature>
<feature type="sequence conflict" description="In Ref. 1; AAC52338." evidence="8" ref="1">
    <original>A</original>
    <variation>P</variation>
    <location>
        <position position="156"/>
    </location>
</feature>
<feature type="sequence conflict" description="In Ref. 3; AAA86274." evidence="8" ref="3">
    <original>A</original>
    <variation>G</variation>
    <location>
        <position position="166"/>
    </location>
</feature>